<protein>
    <recommendedName>
        <fullName evidence="1">Carnitine operon protein CaiE</fullName>
    </recommendedName>
</protein>
<sequence>MSYYAFEGLIPVVHPDAFVHPSAVLIGDVIVGAGVYIGPLASLRGDYGRLILEAGSNLQDGCIMHGYCDTDTIVHENGHIGHGAILHGCVVGRDALVGMNSVIMDGAMIGEESIVAAMSFVKAGFQGEARQLLVGSPARVLRQVTDQELHWKRLNTKEYQDLAIRCRTGLSETKPLTQVEENRPRLKGTTDVKPKSAQ</sequence>
<gene>
    <name evidence="1" type="primary">caiE</name>
    <name type="ordered locus">SeAg_B0076</name>
</gene>
<keyword id="KW-0677">Repeat</keyword>
<keyword id="KW-0808">Transferase</keyword>
<evidence type="ECO:0000255" key="1">
    <source>
        <dbReference type="HAMAP-Rule" id="MF_01525"/>
    </source>
</evidence>
<evidence type="ECO:0000256" key="2">
    <source>
        <dbReference type="SAM" id="MobiDB-lite"/>
    </source>
</evidence>
<name>CAIE_SALA4</name>
<organism>
    <name type="scientific">Salmonella agona (strain SL483)</name>
    <dbReference type="NCBI Taxonomy" id="454166"/>
    <lineage>
        <taxon>Bacteria</taxon>
        <taxon>Pseudomonadati</taxon>
        <taxon>Pseudomonadota</taxon>
        <taxon>Gammaproteobacteria</taxon>
        <taxon>Enterobacterales</taxon>
        <taxon>Enterobacteriaceae</taxon>
        <taxon>Salmonella</taxon>
    </lineage>
</organism>
<dbReference type="EMBL" id="CP001138">
    <property type="protein sequence ID" value="ACH49615.1"/>
    <property type="molecule type" value="Genomic_DNA"/>
</dbReference>
<dbReference type="RefSeq" id="WP_000122859.1">
    <property type="nucleotide sequence ID" value="NC_011149.1"/>
</dbReference>
<dbReference type="SMR" id="B5F748"/>
<dbReference type="KEGG" id="sea:SeAg_B0076"/>
<dbReference type="HOGENOM" id="CLU_064827_4_2_6"/>
<dbReference type="UniPathway" id="UPA00117"/>
<dbReference type="Proteomes" id="UP000008819">
    <property type="component" value="Chromosome"/>
</dbReference>
<dbReference type="GO" id="GO:0016740">
    <property type="term" value="F:transferase activity"/>
    <property type="evidence" value="ECO:0007669"/>
    <property type="project" value="UniProtKB-KW"/>
</dbReference>
<dbReference type="GO" id="GO:0009437">
    <property type="term" value="P:carnitine metabolic process"/>
    <property type="evidence" value="ECO:0007669"/>
    <property type="project" value="UniProtKB-UniRule"/>
</dbReference>
<dbReference type="CDD" id="cd04745">
    <property type="entry name" value="LbH_paaY_like"/>
    <property type="match status" value="1"/>
</dbReference>
<dbReference type="FunFam" id="2.160.10.10:FF:000012">
    <property type="entry name" value="Carnitine operon protein CaiE"/>
    <property type="match status" value="1"/>
</dbReference>
<dbReference type="Gene3D" id="2.160.10.10">
    <property type="entry name" value="Hexapeptide repeat proteins"/>
    <property type="match status" value="1"/>
</dbReference>
<dbReference type="HAMAP" id="MF_01525">
    <property type="entry name" value="CaiE"/>
    <property type="match status" value="1"/>
</dbReference>
<dbReference type="InterPro" id="IPR023446">
    <property type="entry name" value="CaiE"/>
</dbReference>
<dbReference type="InterPro" id="IPR001451">
    <property type="entry name" value="Hexapep"/>
</dbReference>
<dbReference type="InterPro" id="IPR050484">
    <property type="entry name" value="Transf_Hexapept/Carb_Anhydrase"/>
</dbReference>
<dbReference type="InterPro" id="IPR011004">
    <property type="entry name" value="Trimer_LpxA-like_sf"/>
</dbReference>
<dbReference type="NCBIfam" id="NF010150">
    <property type="entry name" value="PRK13627.1"/>
    <property type="match status" value="1"/>
</dbReference>
<dbReference type="PANTHER" id="PTHR13061">
    <property type="entry name" value="DYNACTIN SUBUNIT P25"/>
    <property type="match status" value="1"/>
</dbReference>
<dbReference type="PANTHER" id="PTHR13061:SF29">
    <property type="entry name" value="GAMMA CARBONIC ANHYDRASE-LIKE 1, MITOCHONDRIAL-RELATED"/>
    <property type="match status" value="1"/>
</dbReference>
<dbReference type="Pfam" id="PF00132">
    <property type="entry name" value="Hexapep"/>
    <property type="match status" value="2"/>
</dbReference>
<dbReference type="SUPFAM" id="SSF51161">
    <property type="entry name" value="Trimeric LpxA-like enzymes"/>
    <property type="match status" value="1"/>
</dbReference>
<reference key="1">
    <citation type="journal article" date="2011" name="J. Bacteriol.">
        <title>Comparative genomics of 28 Salmonella enterica isolates: evidence for CRISPR-mediated adaptive sublineage evolution.</title>
        <authorList>
            <person name="Fricke W.F."/>
            <person name="Mammel M.K."/>
            <person name="McDermott P.F."/>
            <person name="Tartera C."/>
            <person name="White D.G."/>
            <person name="Leclerc J.E."/>
            <person name="Ravel J."/>
            <person name="Cebula T.A."/>
        </authorList>
    </citation>
    <scope>NUCLEOTIDE SEQUENCE [LARGE SCALE GENOMIC DNA]</scope>
    <source>
        <strain>SL483</strain>
    </source>
</reference>
<accession>B5F748</accession>
<proteinExistence type="inferred from homology"/>
<comment type="function">
    <text evidence="1">Overproduction of CaiE stimulates the activity of CaiB and CaiD.</text>
</comment>
<comment type="pathway">
    <text evidence="1">Amine and polyamine metabolism; carnitine metabolism.</text>
</comment>
<comment type="similarity">
    <text evidence="1">Belongs to the transferase hexapeptide repeat family.</text>
</comment>
<feature type="chain" id="PRO_1000200930" description="Carnitine operon protein CaiE">
    <location>
        <begin position="1"/>
        <end position="198"/>
    </location>
</feature>
<feature type="region of interest" description="Disordered" evidence="2">
    <location>
        <begin position="179"/>
        <end position="198"/>
    </location>
</feature>
<feature type="compositionally biased region" description="Basic and acidic residues" evidence="2">
    <location>
        <begin position="180"/>
        <end position="198"/>
    </location>
</feature>